<accession>Q49WS9</accession>
<dbReference type="EC" id="1.-.-.-"/>
<dbReference type="EMBL" id="AP008934">
    <property type="protein sequence ID" value="BAE18772.1"/>
    <property type="molecule type" value="Genomic_DNA"/>
</dbReference>
<dbReference type="RefSeq" id="WP_002509534.1">
    <property type="nucleotide sequence ID" value="NC_007350.1"/>
</dbReference>
<dbReference type="SMR" id="Q49WS9"/>
<dbReference type="GeneID" id="97226620"/>
<dbReference type="KEGG" id="ssp:SSP1627"/>
<dbReference type="eggNOG" id="COG4221">
    <property type="taxonomic scope" value="Bacteria"/>
</dbReference>
<dbReference type="HOGENOM" id="CLU_010194_2_10_9"/>
<dbReference type="OrthoDB" id="9775296at2"/>
<dbReference type="Proteomes" id="UP000006371">
    <property type="component" value="Chromosome"/>
</dbReference>
<dbReference type="GO" id="GO:0016491">
    <property type="term" value="F:oxidoreductase activity"/>
    <property type="evidence" value="ECO:0007669"/>
    <property type="project" value="UniProtKB-KW"/>
</dbReference>
<dbReference type="FunFam" id="3.40.50.720:FF:000047">
    <property type="entry name" value="NADP-dependent L-serine/L-allo-threonine dehydrogenase"/>
    <property type="match status" value="1"/>
</dbReference>
<dbReference type="Gene3D" id="3.40.50.720">
    <property type="entry name" value="NAD(P)-binding Rossmann-like Domain"/>
    <property type="match status" value="1"/>
</dbReference>
<dbReference type="InterPro" id="IPR036291">
    <property type="entry name" value="NAD(P)-bd_dom_sf"/>
</dbReference>
<dbReference type="InterPro" id="IPR020904">
    <property type="entry name" value="Sc_DH/Rdtase_CS"/>
</dbReference>
<dbReference type="InterPro" id="IPR002347">
    <property type="entry name" value="SDR_fam"/>
</dbReference>
<dbReference type="PANTHER" id="PTHR43115">
    <property type="entry name" value="DEHYDROGENASE/REDUCTASE SDR FAMILY MEMBER 11"/>
    <property type="match status" value="1"/>
</dbReference>
<dbReference type="PANTHER" id="PTHR43115:SF4">
    <property type="entry name" value="DEHYDROGENASE_REDUCTASE SDR FAMILY MEMBER 11"/>
    <property type="match status" value="1"/>
</dbReference>
<dbReference type="Pfam" id="PF00106">
    <property type="entry name" value="adh_short"/>
    <property type="match status" value="1"/>
</dbReference>
<dbReference type="PRINTS" id="PR00081">
    <property type="entry name" value="GDHRDH"/>
</dbReference>
<dbReference type="PRINTS" id="PR00080">
    <property type="entry name" value="SDRFAMILY"/>
</dbReference>
<dbReference type="SUPFAM" id="SSF51735">
    <property type="entry name" value="NAD(P)-binding Rossmann-fold domains"/>
    <property type="match status" value="1"/>
</dbReference>
<dbReference type="PROSITE" id="PS00061">
    <property type="entry name" value="ADH_SHORT"/>
    <property type="match status" value="1"/>
</dbReference>
<protein>
    <recommendedName>
        <fullName>Uncharacterized oxidoreductase SSP1627</fullName>
        <ecNumber>1.-.-.-</ecNumber>
    </recommendedName>
</protein>
<evidence type="ECO:0000250" key="1"/>
<evidence type="ECO:0000255" key="2">
    <source>
        <dbReference type="PROSITE-ProRule" id="PRU10001"/>
    </source>
</evidence>
<evidence type="ECO:0000305" key="3"/>
<feature type="chain" id="PRO_0000300482" description="Uncharacterized oxidoreductase SSP1627">
    <location>
        <begin position="1"/>
        <end position="246"/>
    </location>
</feature>
<feature type="active site" description="Proton acceptor" evidence="2">
    <location>
        <position position="153"/>
    </location>
</feature>
<feature type="binding site" evidence="1">
    <location>
        <begin position="10"/>
        <end position="34"/>
    </location>
    <ligand>
        <name>NADP(+)</name>
        <dbReference type="ChEBI" id="CHEBI:58349"/>
    </ligand>
</feature>
<feature type="binding site" evidence="1">
    <location>
        <position position="140"/>
    </location>
    <ligand>
        <name>substrate</name>
    </ligand>
</feature>
<organism>
    <name type="scientific">Staphylococcus saprophyticus subsp. saprophyticus (strain ATCC 15305 / DSM 20229 / NCIMB 8711 / NCTC 7292 / S-41)</name>
    <dbReference type="NCBI Taxonomy" id="342451"/>
    <lineage>
        <taxon>Bacteria</taxon>
        <taxon>Bacillati</taxon>
        <taxon>Bacillota</taxon>
        <taxon>Bacilli</taxon>
        <taxon>Bacillales</taxon>
        <taxon>Staphylococcaceae</taxon>
        <taxon>Staphylococcus</taxon>
    </lineage>
</organism>
<proteinExistence type="inferred from homology"/>
<keyword id="KW-0560">Oxidoreductase</keyword>
<keyword id="KW-1185">Reference proteome</keyword>
<reference key="1">
    <citation type="journal article" date="2005" name="Proc. Natl. Acad. Sci. U.S.A.">
        <title>Whole genome sequence of Staphylococcus saprophyticus reveals the pathogenesis of uncomplicated urinary tract infection.</title>
        <authorList>
            <person name="Kuroda M."/>
            <person name="Yamashita A."/>
            <person name="Hirakawa H."/>
            <person name="Kumano M."/>
            <person name="Morikawa K."/>
            <person name="Higashide M."/>
            <person name="Maruyama A."/>
            <person name="Inose Y."/>
            <person name="Matoba K."/>
            <person name="Toh H."/>
            <person name="Kuhara S."/>
            <person name="Hattori M."/>
            <person name="Ohta T."/>
        </authorList>
    </citation>
    <scope>NUCLEOTIDE SEQUENCE [LARGE SCALE GENOMIC DNA]</scope>
    <source>
        <strain>ATCC 15305 / DSM 20229 / NCIMB 8711 / NCTC 7292 / S-41</strain>
    </source>
</reference>
<name>Y1627_STAS1</name>
<gene>
    <name type="ordered locus">SSP1627</name>
</gene>
<comment type="similarity">
    <text evidence="3">Belongs to the short-chain dehydrogenases/reductases (SDR) family.</text>
</comment>
<sequence length="246" mass="26894">MNNVKDKVVVITGASSGIGEETVNLLSENGAKLVLGARRLDRLEKIQQKVGHDSVSIKKTDVTKPDEVNALIETAYNDFGRIDVLINNAGLMPQSFLEKNKQDEWNQMIDVNIKGVLYGIGAVLPYMRKQKSGHIINLASVAGHVVFPGSAVYCGTKYAVRAITEGLRQEEAIVGSNIRTTILSPGAVSTELTDHISDKDMKQDIDELYKNAIKPDAIARAINYAINEPEESSVNEFIIRPSSQSL</sequence>